<dbReference type="EMBL" id="AK147238">
    <property type="protein sequence ID" value="BAE27788.1"/>
    <property type="molecule type" value="mRNA"/>
</dbReference>
<dbReference type="EMBL" id="AK148084">
    <property type="protein sequence ID" value="BAE28336.1"/>
    <property type="molecule type" value="mRNA"/>
</dbReference>
<dbReference type="EMBL" id="AK166316">
    <property type="protein sequence ID" value="BAE38699.1"/>
    <property type="molecule type" value="mRNA"/>
</dbReference>
<dbReference type="EMBL" id="BC075647">
    <property type="protein sequence ID" value="AAH75647.1"/>
    <property type="molecule type" value="mRNA"/>
</dbReference>
<dbReference type="CCDS" id="CCDS29264.1"/>
<dbReference type="RefSeq" id="NP_001001979.1">
    <property type="nucleotide sequence ID" value="NM_001001979.2"/>
</dbReference>
<dbReference type="SMR" id="Q6DIB5"/>
<dbReference type="BioGRID" id="214036">
    <property type="interactions" value="2"/>
</dbReference>
<dbReference type="FunCoup" id="Q6DIB5">
    <property type="interactions" value="1273"/>
</dbReference>
<dbReference type="STRING" id="10090.ENSMUSP00000075174"/>
<dbReference type="GlyCosmos" id="Q6DIB5">
    <property type="glycosylation" value="2 sites, No reported glycans"/>
</dbReference>
<dbReference type="GlyGen" id="Q6DIB5">
    <property type="glycosylation" value="6 sites, 4 N-linked glycans (4 sites)"/>
</dbReference>
<dbReference type="iPTMnet" id="Q6DIB5"/>
<dbReference type="PhosphoSitePlus" id="Q6DIB5"/>
<dbReference type="PaxDb" id="10090-ENSMUSP00000075174"/>
<dbReference type="PeptideAtlas" id="Q6DIB5"/>
<dbReference type="ProteomicsDB" id="292292"/>
<dbReference type="Antibodypedia" id="14004">
    <property type="antibodies" value="88 antibodies from 15 providers"/>
</dbReference>
<dbReference type="DNASU" id="70417"/>
<dbReference type="Ensembl" id="ENSMUST00000075770.13">
    <property type="protein sequence ID" value="ENSMUSP00000075174.7"/>
    <property type="gene ID" value="ENSMUSG00000024593.16"/>
</dbReference>
<dbReference type="GeneID" id="70417"/>
<dbReference type="KEGG" id="mmu:70417"/>
<dbReference type="UCSC" id="uc008eyz.2">
    <property type="organism name" value="mouse"/>
</dbReference>
<dbReference type="AGR" id="MGI:2685177"/>
<dbReference type="CTD" id="84466"/>
<dbReference type="MGI" id="MGI:2685177">
    <property type="gene designation" value="Megf10"/>
</dbReference>
<dbReference type="VEuPathDB" id="HostDB:ENSMUSG00000024593"/>
<dbReference type="eggNOG" id="KOG1218">
    <property type="taxonomic scope" value="Eukaryota"/>
</dbReference>
<dbReference type="GeneTree" id="ENSGT00940000157703"/>
<dbReference type="HOGENOM" id="CLU_008281_1_0_1"/>
<dbReference type="InParanoid" id="Q6DIB5"/>
<dbReference type="OMA" id="CGKEAHF"/>
<dbReference type="OrthoDB" id="409374at2759"/>
<dbReference type="PhylomeDB" id="Q6DIB5"/>
<dbReference type="TreeFam" id="TF332598"/>
<dbReference type="BioGRID-ORCS" id="70417">
    <property type="hits" value="3 hits in 76 CRISPR screens"/>
</dbReference>
<dbReference type="ChiTaRS" id="Megf10">
    <property type="organism name" value="mouse"/>
</dbReference>
<dbReference type="PRO" id="PR:Q6DIB5"/>
<dbReference type="Proteomes" id="UP000000589">
    <property type="component" value="Chromosome 18"/>
</dbReference>
<dbReference type="RNAct" id="Q6DIB5">
    <property type="molecule type" value="protein"/>
</dbReference>
<dbReference type="Bgee" id="ENSMUSG00000024593">
    <property type="expression patterns" value="Expressed in otolith organ and 143 other cell types or tissues"/>
</dbReference>
<dbReference type="ExpressionAtlas" id="Q6DIB5">
    <property type="expression patterns" value="baseline and differential"/>
</dbReference>
<dbReference type="GO" id="GO:0042995">
    <property type="term" value="C:cell projection"/>
    <property type="evidence" value="ECO:0007669"/>
    <property type="project" value="UniProtKB-KW"/>
</dbReference>
<dbReference type="GO" id="GO:0001891">
    <property type="term" value="C:phagocytic cup"/>
    <property type="evidence" value="ECO:0000314"/>
    <property type="project" value="MGI"/>
</dbReference>
<dbReference type="GO" id="GO:0005886">
    <property type="term" value="C:plasma membrane"/>
    <property type="evidence" value="ECO:0000314"/>
    <property type="project" value="UniProtKB"/>
</dbReference>
<dbReference type="GO" id="GO:0001849">
    <property type="term" value="F:complement component C1q complex binding"/>
    <property type="evidence" value="ECO:0000266"/>
    <property type="project" value="MGI"/>
</dbReference>
<dbReference type="GO" id="GO:0005112">
    <property type="term" value="F:Notch binding"/>
    <property type="evidence" value="ECO:0000353"/>
    <property type="project" value="UniProtKB"/>
</dbReference>
<dbReference type="GO" id="GO:0005044">
    <property type="term" value="F:scavenger receptor activity"/>
    <property type="evidence" value="ECO:0000266"/>
    <property type="project" value="MGI"/>
</dbReference>
<dbReference type="GO" id="GO:1902742">
    <property type="term" value="P:apoptotic process involved in development"/>
    <property type="evidence" value="ECO:0000315"/>
    <property type="project" value="MGI"/>
</dbReference>
<dbReference type="GO" id="GO:0043652">
    <property type="term" value="P:engulfment of apoptotic cell"/>
    <property type="evidence" value="ECO:0000315"/>
    <property type="project" value="MGI"/>
</dbReference>
<dbReference type="GO" id="GO:0034109">
    <property type="term" value="P:homotypic cell-cell adhesion"/>
    <property type="evidence" value="ECO:0000250"/>
    <property type="project" value="UniProtKB"/>
</dbReference>
<dbReference type="GO" id="GO:0055001">
    <property type="term" value="P:muscle cell development"/>
    <property type="evidence" value="ECO:0000250"/>
    <property type="project" value="UniProtKB"/>
</dbReference>
<dbReference type="GO" id="GO:0048627">
    <property type="term" value="P:myoblast development"/>
    <property type="evidence" value="ECO:0000315"/>
    <property type="project" value="UniProtKB"/>
</dbReference>
<dbReference type="GO" id="GO:0051451">
    <property type="term" value="P:myoblast migration"/>
    <property type="evidence" value="ECO:0000315"/>
    <property type="project" value="UniProtKB"/>
</dbReference>
<dbReference type="GO" id="GO:0022409">
    <property type="term" value="P:positive regulation of cell-cell adhesion"/>
    <property type="evidence" value="ECO:0007669"/>
    <property type="project" value="Ensembl"/>
</dbReference>
<dbReference type="GO" id="GO:2000288">
    <property type="term" value="P:positive regulation of myoblast proliferation"/>
    <property type="evidence" value="ECO:0000315"/>
    <property type="project" value="UniProtKB"/>
</dbReference>
<dbReference type="GO" id="GO:0043654">
    <property type="term" value="P:recognition of apoptotic cell"/>
    <property type="evidence" value="ECO:0000314"/>
    <property type="project" value="MGI"/>
</dbReference>
<dbReference type="GO" id="GO:0051147">
    <property type="term" value="P:regulation of muscle cell differentiation"/>
    <property type="evidence" value="ECO:0000250"/>
    <property type="project" value="UniProtKB"/>
</dbReference>
<dbReference type="GO" id="GO:0048641">
    <property type="term" value="P:regulation of skeletal muscle tissue development"/>
    <property type="evidence" value="ECO:0007669"/>
    <property type="project" value="Ensembl"/>
</dbReference>
<dbReference type="GO" id="GO:0014719">
    <property type="term" value="P:skeletal muscle satellite cell activation"/>
    <property type="evidence" value="ECO:0000315"/>
    <property type="project" value="UniProtKB"/>
</dbReference>
<dbReference type="GO" id="GO:0014816">
    <property type="term" value="P:skeletal muscle satellite cell differentiation"/>
    <property type="evidence" value="ECO:0000315"/>
    <property type="project" value="UniProtKB"/>
</dbReference>
<dbReference type="GO" id="GO:0014841">
    <property type="term" value="P:skeletal muscle satellite cell proliferation"/>
    <property type="evidence" value="ECO:0000314"/>
    <property type="project" value="UniProtKB"/>
</dbReference>
<dbReference type="CDD" id="cd00055">
    <property type="entry name" value="EGF_Lam"/>
    <property type="match status" value="1"/>
</dbReference>
<dbReference type="FunFam" id="2.170.300.10:FF:000016">
    <property type="entry name" value="Multiple epidermal growth factor-like domains 10"/>
    <property type="match status" value="1"/>
</dbReference>
<dbReference type="FunFam" id="2.170.300.10:FF:000014">
    <property type="entry name" value="Multiple epidermal growth factor-like domains protein 10"/>
    <property type="match status" value="1"/>
</dbReference>
<dbReference type="FunFam" id="2.170.300.10:FF:000007">
    <property type="entry name" value="multiple epidermal growth factor-like domains protein 10"/>
    <property type="match status" value="1"/>
</dbReference>
<dbReference type="FunFam" id="2.10.25.10:FF:000114">
    <property type="entry name" value="Multiple epidermal growth factor-like domains protein 11"/>
    <property type="match status" value="1"/>
</dbReference>
<dbReference type="FunFam" id="2.170.300.10:FF:000006">
    <property type="entry name" value="Multiple epidermal growth factor-like domains protein 11"/>
    <property type="match status" value="1"/>
</dbReference>
<dbReference type="FunFam" id="2.170.300.10:FF:000005">
    <property type="entry name" value="multiple epidermal growth factor-like domains protein 11"/>
    <property type="match status" value="1"/>
</dbReference>
<dbReference type="Gene3D" id="2.170.300.10">
    <property type="entry name" value="Tie2 ligand-binding domain superfamily"/>
    <property type="match status" value="6"/>
</dbReference>
<dbReference type="InterPro" id="IPR013032">
    <property type="entry name" value="EGF-like_CS"/>
</dbReference>
<dbReference type="InterPro" id="IPR000742">
    <property type="entry name" value="EGF-like_dom"/>
</dbReference>
<dbReference type="InterPro" id="IPR013111">
    <property type="entry name" value="EGF_extracell"/>
</dbReference>
<dbReference type="InterPro" id="IPR057138">
    <property type="entry name" value="EGF_PEAR1L-like"/>
</dbReference>
<dbReference type="InterPro" id="IPR011489">
    <property type="entry name" value="EMI_domain"/>
</dbReference>
<dbReference type="InterPro" id="IPR002049">
    <property type="entry name" value="LE_dom"/>
</dbReference>
<dbReference type="InterPro" id="IPR052485">
    <property type="entry name" value="MEGF_diff_regulators"/>
</dbReference>
<dbReference type="PANTHER" id="PTHR24052">
    <property type="entry name" value="DELTA-RELATED"/>
    <property type="match status" value="1"/>
</dbReference>
<dbReference type="PANTHER" id="PTHR24052:SF8">
    <property type="entry name" value="NIMROD A, ISOFORM E"/>
    <property type="match status" value="1"/>
</dbReference>
<dbReference type="Pfam" id="PF07974">
    <property type="entry name" value="EGF_2"/>
    <property type="match status" value="1"/>
</dbReference>
<dbReference type="Pfam" id="PF00053">
    <property type="entry name" value="EGF_laminin"/>
    <property type="match status" value="5"/>
</dbReference>
<dbReference type="Pfam" id="PF23301">
    <property type="entry name" value="EGF_PEAR1L"/>
    <property type="match status" value="1"/>
</dbReference>
<dbReference type="Pfam" id="PF12661">
    <property type="entry name" value="hEGF"/>
    <property type="match status" value="7"/>
</dbReference>
<dbReference type="PRINTS" id="PR00011">
    <property type="entry name" value="EGFLAMININ"/>
</dbReference>
<dbReference type="SMART" id="SM00181">
    <property type="entry name" value="EGF"/>
    <property type="match status" value="17"/>
</dbReference>
<dbReference type="SMART" id="SM00180">
    <property type="entry name" value="EGF_Lam"/>
    <property type="match status" value="14"/>
</dbReference>
<dbReference type="PROSITE" id="PS00022">
    <property type="entry name" value="EGF_1"/>
    <property type="match status" value="17"/>
</dbReference>
<dbReference type="PROSITE" id="PS01186">
    <property type="entry name" value="EGF_2"/>
    <property type="match status" value="17"/>
</dbReference>
<dbReference type="PROSITE" id="PS50026">
    <property type="entry name" value="EGF_3"/>
    <property type="match status" value="15"/>
</dbReference>
<dbReference type="PROSITE" id="PS51041">
    <property type="entry name" value="EMI"/>
    <property type="match status" value="1"/>
</dbReference>
<evidence type="ECO:0000250" key="1"/>
<evidence type="ECO:0000250" key="2">
    <source>
        <dbReference type="UniProtKB" id="Q96KG7"/>
    </source>
</evidence>
<evidence type="ECO:0000255" key="3"/>
<evidence type="ECO:0000255" key="4">
    <source>
        <dbReference type="PROSITE-ProRule" id="PRU00076"/>
    </source>
</evidence>
<evidence type="ECO:0000255" key="5">
    <source>
        <dbReference type="PROSITE-ProRule" id="PRU00384"/>
    </source>
</evidence>
<evidence type="ECO:0000256" key="6">
    <source>
        <dbReference type="SAM" id="MobiDB-lite"/>
    </source>
</evidence>
<evidence type="ECO:0000269" key="7">
    <source>
    </source>
</evidence>
<evidence type="ECO:0000269" key="8">
    <source>
    </source>
</evidence>
<evidence type="ECO:0000269" key="9">
    <source>
    </source>
</evidence>
<evidence type="ECO:0000269" key="10">
    <source>
    </source>
</evidence>
<evidence type="ECO:0000269" key="11">
    <source>
    </source>
</evidence>
<evidence type="ECO:0000269" key="12">
    <source>
    </source>
</evidence>
<evidence type="ECO:0000269" key="13">
    <source>
    </source>
</evidence>
<evidence type="ECO:0000269" key="14">
    <source ref="10"/>
</evidence>
<evidence type="ECO:0000305" key="15"/>
<evidence type="ECO:0000312" key="16">
    <source>
        <dbReference type="MGI" id="MGI:2685177"/>
    </source>
</evidence>
<comment type="function">
    <text evidence="2 9 10 11 12 13 14">Membrane receptor involved in phagocytosis by macrophages and astrocytes of apoptotic cells. Receptor for C1q, an eat-me signal, that binds phosphatidylserine expressed on the surface of apoptotic cells (PubMed:27170117). Cooperates with ABCA1 within the process of engulfment (By similarity). Promotes the formation of large intracellular vacuoles and may be responsible for the uptake of amyloid-beta peptides (PubMed:20828568). Necessary for astrocyte-dependent apoptotic neuron clearance in the developing cerebellum (PubMed:27170117). Plays a role in muscle cell proliferation, adhesion and motility. Is also an essential factor in the regulation of myogenesis. Controls the balance between skeletal muscle satellite cells proliferation and differentiation through regulation of the notch signaling pathway (PubMed:28498977, Ref.10). May also function in the mosaic spacing of specific neuron subtypes in the retina through homotypic retinal neuron repulsion. Mosaics provide a mechanism to distribute each cell type evenly across the retina, ensuring that all parts of the visual field have access to a full set of processing elements (PubMed:22407321).</text>
</comment>
<comment type="subunit">
    <text evidence="2 13 15">Homomer (Probable). Interacts with GULP1 and ABCA1. Interacts with AP2M1. Does not interact with MEGF11 (By similarity). Binds with high affinity to complement C1q (By similarity). Interacts (via the cytoplasmic domain) with NOTCH1 (via NICD domain) (PubMed:28498977).</text>
</comment>
<comment type="subcellular location">
    <subcellularLocation>
        <location evidence="8 13">Cell membrane</location>
        <topology evidence="8">Single-pass type I membrane protein</topology>
    </subcellularLocation>
    <subcellularLocation>
        <location evidence="2">Cell projection</location>
        <location evidence="2">Phagocytic cup</location>
    </subcellularLocation>
    <text evidence="2">Forms an irregular, mosaic-like adhesion pattern in region of the cell surface that becomes firmely fixed to the substrate. Expressed at the cell surface in clusters around cell corpses during engulfment. During the engulfment of apoptotic thymocytes, recruited at the bottom of the forming phagocytic cup. Colocalizes with ABCA1 in absence of any phagocytic challenge. Does not localize within lamellipodia. Does not localize with MEGF11 (By similarity). Enriched at the sites of contact with apoptotic thymocyte cells.</text>
</comment>
<comment type="tissue specificity">
    <text evidence="7 8 9">Expressed in cerebellum (at protein level). Expressed in kidney, stellate cells of the cerebellum and macrophage cell lines.</text>
</comment>
<comment type="developmental stage">
    <text evidence="7">Expressed in embryo at 15 dpc (at protein level). Expressed in embryo at 8, 10, 11, 13, 14 and 15 dpc.</text>
</comment>
<comment type="domain">
    <text>The EMI and EGF-like domains work in concert to promote self-assembly.</text>
</comment>
<comment type="PTM">
    <text evidence="2">Ubiquitinated; mono- and polyubiquitinated forms are detected.</text>
</comment>
<comment type="PTM">
    <text evidence="2">Phosphorylated on tyrosine residues. Phosphorylation at Tyr-1030 may be important for muscle cell proliferation.</text>
</comment>
<comment type="disruption phenotype">
    <text evidence="12 13 14">Mutants show at postnatal day 7 an increased amount of apoptotic cells in the developing cerebellum. However, adult brains do not show higher numbers of apoptotic cells in the cerebellum compared to wild-type. Astrocytes from knockout mice as well as heterozygous mice have a significant impairment in engulfment of apoptotic cells (PubMed:27170117). Reduced proliferation of primary myoblasts (Ref.10). Mutants have normal mobility and their skeletal muscles show mildly increased endomysial connective tissue. They display reduced motor activity after exercise and show slower muscle regeneration (PubMed:28498977). MEGF10 and DMD double knockout animals have pronounced fiber size variability and intracellular inclusions in the quadriceps femoris with extensive endomysial connective tissue infiltration. Mice develop muscle weakness, kyphosis and a waddling gait. At 2 months of age, they have reduced contractile force compared to wild-type mice. They display reduced motor activity after exercise and they walk shorter distances than wild-type. They have a delayed regeneration after muscle injury and an aberrant muscle fber typing and cross-sectional areas (PubMed:28498977).</text>
</comment>
<comment type="similarity">
    <text evidence="15">Belongs to the MEGF family.</text>
</comment>
<proteinExistence type="evidence at protein level"/>
<reference key="1">
    <citation type="journal article" date="2005" name="Science">
        <title>The transcriptional landscape of the mammalian genome.</title>
        <authorList>
            <person name="Carninci P."/>
            <person name="Kasukawa T."/>
            <person name="Katayama S."/>
            <person name="Gough J."/>
            <person name="Frith M.C."/>
            <person name="Maeda N."/>
            <person name="Oyama R."/>
            <person name="Ravasi T."/>
            <person name="Lenhard B."/>
            <person name="Wells C."/>
            <person name="Kodzius R."/>
            <person name="Shimokawa K."/>
            <person name="Bajic V.B."/>
            <person name="Brenner S.E."/>
            <person name="Batalov S."/>
            <person name="Forrest A.R."/>
            <person name="Zavolan M."/>
            <person name="Davis M.J."/>
            <person name="Wilming L.G."/>
            <person name="Aidinis V."/>
            <person name="Allen J.E."/>
            <person name="Ambesi-Impiombato A."/>
            <person name="Apweiler R."/>
            <person name="Aturaliya R.N."/>
            <person name="Bailey T.L."/>
            <person name="Bansal M."/>
            <person name="Baxter L."/>
            <person name="Beisel K.W."/>
            <person name="Bersano T."/>
            <person name="Bono H."/>
            <person name="Chalk A.M."/>
            <person name="Chiu K.P."/>
            <person name="Choudhary V."/>
            <person name="Christoffels A."/>
            <person name="Clutterbuck D.R."/>
            <person name="Crowe M.L."/>
            <person name="Dalla E."/>
            <person name="Dalrymple B.P."/>
            <person name="de Bono B."/>
            <person name="Della Gatta G."/>
            <person name="di Bernardo D."/>
            <person name="Down T."/>
            <person name="Engstrom P."/>
            <person name="Fagiolini M."/>
            <person name="Faulkner G."/>
            <person name="Fletcher C.F."/>
            <person name="Fukushima T."/>
            <person name="Furuno M."/>
            <person name="Futaki S."/>
            <person name="Gariboldi M."/>
            <person name="Georgii-Hemming P."/>
            <person name="Gingeras T.R."/>
            <person name="Gojobori T."/>
            <person name="Green R.E."/>
            <person name="Gustincich S."/>
            <person name="Harbers M."/>
            <person name="Hayashi Y."/>
            <person name="Hensch T.K."/>
            <person name="Hirokawa N."/>
            <person name="Hill D."/>
            <person name="Huminiecki L."/>
            <person name="Iacono M."/>
            <person name="Ikeo K."/>
            <person name="Iwama A."/>
            <person name="Ishikawa T."/>
            <person name="Jakt M."/>
            <person name="Kanapin A."/>
            <person name="Katoh M."/>
            <person name="Kawasawa Y."/>
            <person name="Kelso J."/>
            <person name="Kitamura H."/>
            <person name="Kitano H."/>
            <person name="Kollias G."/>
            <person name="Krishnan S.P."/>
            <person name="Kruger A."/>
            <person name="Kummerfeld S.K."/>
            <person name="Kurochkin I.V."/>
            <person name="Lareau L.F."/>
            <person name="Lazarevic D."/>
            <person name="Lipovich L."/>
            <person name="Liu J."/>
            <person name="Liuni S."/>
            <person name="McWilliam S."/>
            <person name="Madan Babu M."/>
            <person name="Madera M."/>
            <person name="Marchionni L."/>
            <person name="Matsuda H."/>
            <person name="Matsuzawa S."/>
            <person name="Miki H."/>
            <person name="Mignone F."/>
            <person name="Miyake S."/>
            <person name="Morris K."/>
            <person name="Mottagui-Tabar S."/>
            <person name="Mulder N."/>
            <person name="Nakano N."/>
            <person name="Nakauchi H."/>
            <person name="Ng P."/>
            <person name="Nilsson R."/>
            <person name="Nishiguchi S."/>
            <person name="Nishikawa S."/>
            <person name="Nori F."/>
            <person name="Ohara O."/>
            <person name="Okazaki Y."/>
            <person name="Orlando V."/>
            <person name="Pang K.C."/>
            <person name="Pavan W.J."/>
            <person name="Pavesi G."/>
            <person name="Pesole G."/>
            <person name="Petrovsky N."/>
            <person name="Piazza S."/>
            <person name="Reed J."/>
            <person name="Reid J.F."/>
            <person name="Ring B.Z."/>
            <person name="Ringwald M."/>
            <person name="Rost B."/>
            <person name="Ruan Y."/>
            <person name="Salzberg S.L."/>
            <person name="Sandelin A."/>
            <person name="Schneider C."/>
            <person name="Schoenbach C."/>
            <person name="Sekiguchi K."/>
            <person name="Semple C.A."/>
            <person name="Seno S."/>
            <person name="Sessa L."/>
            <person name="Sheng Y."/>
            <person name="Shibata Y."/>
            <person name="Shimada H."/>
            <person name="Shimada K."/>
            <person name="Silva D."/>
            <person name="Sinclair B."/>
            <person name="Sperling S."/>
            <person name="Stupka E."/>
            <person name="Sugiura K."/>
            <person name="Sultana R."/>
            <person name="Takenaka Y."/>
            <person name="Taki K."/>
            <person name="Tammoja K."/>
            <person name="Tan S.L."/>
            <person name="Tang S."/>
            <person name="Taylor M.S."/>
            <person name="Tegner J."/>
            <person name="Teichmann S.A."/>
            <person name="Ueda H.R."/>
            <person name="van Nimwegen E."/>
            <person name="Verardo R."/>
            <person name="Wei C.L."/>
            <person name="Yagi K."/>
            <person name="Yamanishi H."/>
            <person name="Zabarovsky E."/>
            <person name="Zhu S."/>
            <person name="Zimmer A."/>
            <person name="Hide W."/>
            <person name="Bult C."/>
            <person name="Grimmond S.M."/>
            <person name="Teasdale R.D."/>
            <person name="Liu E.T."/>
            <person name="Brusic V."/>
            <person name="Quackenbush J."/>
            <person name="Wahlestedt C."/>
            <person name="Mattick J.S."/>
            <person name="Hume D.A."/>
            <person name="Kai C."/>
            <person name="Sasaki D."/>
            <person name="Tomaru Y."/>
            <person name="Fukuda S."/>
            <person name="Kanamori-Katayama M."/>
            <person name="Suzuki M."/>
            <person name="Aoki J."/>
            <person name="Arakawa T."/>
            <person name="Iida J."/>
            <person name="Imamura K."/>
            <person name="Itoh M."/>
            <person name="Kato T."/>
            <person name="Kawaji H."/>
            <person name="Kawagashira N."/>
            <person name="Kawashima T."/>
            <person name="Kojima M."/>
            <person name="Kondo S."/>
            <person name="Konno H."/>
            <person name="Nakano K."/>
            <person name="Ninomiya N."/>
            <person name="Nishio T."/>
            <person name="Okada M."/>
            <person name="Plessy C."/>
            <person name="Shibata K."/>
            <person name="Shiraki T."/>
            <person name="Suzuki S."/>
            <person name="Tagami M."/>
            <person name="Waki K."/>
            <person name="Watahiki A."/>
            <person name="Okamura-Oho Y."/>
            <person name="Suzuki H."/>
            <person name="Kawai J."/>
            <person name="Hayashizaki Y."/>
        </authorList>
    </citation>
    <scope>NUCLEOTIDE SEQUENCE [LARGE SCALE MRNA]</scope>
    <source>
        <strain>C57BL/6J</strain>
        <tissue>Mammary gland</tissue>
    </source>
</reference>
<reference key="2">
    <citation type="journal article" date="2004" name="Genome Res.">
        <title>The status, quality, and expansion of the NIH full-length cDNA project: the Mammalian Gene Collection (MGC).</title>
        <authorList>
            <consortium name="The MGC Project Team"/>
        </authorList>
    </citation>
    <scope>NUCLEOTIDE SEQUENCE [LARGE SCALE MRNA]</scope>
    <source>
        <strain>C57BL/6J</strain>
        <tissue>Brain</tissue>
    </source>
</reference>
<reference key="3">
    <citation type="journal article" date="2006" name="PLoS ONE">
        <title>Cooperation between engulfment receptors: the case of ABCA1 and MEGF10.</title>
        <authorList>
            <person name="Hamon Y."/>
            <person name="Trompier D."/>
            <person name="Ma Z."/>
            <person name="Venegas V."/>
            <person name="Pophillat M."/>
            <person name="Mignotte V."/>
            <person name="Zhou Z."/>
            <person name="Chimini G."/>
        </authorList>
    </citation>
    <scope>TISSUE SPECIFICITY</scope>
    <scope>DEVELOPMENTAL STAGE</scope>
</reference>
<reference key="4">
    <citation type="journal article" date="2007" name="Exp. Cell Res.">
        <title>MEGF10 is a mammalian ortholog of CED-1 that interacts with clathrin assembly protein complex 2 medium chain and induces large vacuole formation.</title>
        <authorList>
            <person name="Suzuki E."/>
            <person name="Nakayama M."/>
        </authorList>
    </citation>
    <scope>SUBCELLULAR LOCATION</scope>
    <scope>TISSUE SPECIFICITY</scope>
</reference>
<reference key="5">
    <citation type="journal article" date="2007" name="J. Cell Biol.">
        <title>Megf10 regulates the progression of the satellite cell myogenic program.</title>
        <authorList>
            <person name="Holterman C.E."/>
            <person name="Le Grand F."/>
            <person name="Kuang S."/>
            <person name="Seale P."/>
            <person name="Rudnicki M.A."/>
        </authorList>
    </citation>
    <scope>FUNCTION IN MYOGENESIS</scope>
    <scope>TISSUE SPECIFICITY</scope>
</reference>
<reference key="6">
    <citation type="journal article" date="2010" name="FEBS Lett.">
        <title>MEGF10 functions as a receptor for the uptake of amyloid-beta.</title>
        <authorList>
            <person name="Singh T.D."/>
            <person name="Park S.Y."/>
            <person name="Bae J.S."/>
            <person name="Yun Y."/>
            <person name="Bae Y.C."/>
            <person name="Park R.W."/>
            <person name="Kim I.S."/>
        </authorList>
    </citation>
    <scope>FUNCTION IN ENDOCYTOSIS</scope>
</reference>
<reference key="7">
    <citation type="journal article" date="2012" name="Nature">
        <title>MEGF10 and MEGF11 mediate homotypic interactions required for mosaic spacing of retinal neurons.</title>
        <authorList>
            <person name="Kay J.N."/>
            <person name="Chu M.W."/>
            <person name="Sanes J.R."/>
        </authorList>
    </citation>
    <scope>FUNCTION IN NEURONAL MOSAIC SPACING</scope>
</reference>
<reference key="8">
    <citation type="journal article" date="2016" name="J. Neurosci.">
        <title>Megf10 Is a Receptor for C1Q That Mediates Clearance of Apoptotic Cells by Astrocytes.</title>
        <authorList>
            <person name="Iram T."/>
            <person name="Ramirez-Ortiz Z."/>
            <person name="Byrne M.H."/>
            <person name="Coleman U.A."/>
            <person name="Kingery N.D."/>
            <person name="Means T.K."/>
            <person name="Frenkel D."/>
            <person name="El Khoury J."/>
        </authorList>
    </citation>
    <scope>FUNCTION</scope>
    <scope>DISRUPTION PHENOTYPE</scope>
</reference>
<reference key="9">
    <citation type="journal article" date="2017" name="Hum. Mol. Genet.">
        <title>Consequences of MEGF10 deficiency on myoblast function and Notch1 interactions.</title>
        <authorList>
            <person name="Saha M."/>
            <person name="Mitsuhashi S."/>
            <person name="Jones M.D."/>
            <person name="Manko K."/>
            <person name="Reddy H.M."/>
            <person name="Bruels C."/>
            <person name="Cho K.A."/>
            <person name="Pacak C.A."/>
            <person name="Draper I."/>
            <person name="Kang P.B."/>
        </authorList>
    </citation>
    <scope>FUNCTION</scope>
    <scope>DISRUPTION PHENOTYPE</scope>
    <scope>SUBCELLULAR LOCATION</scope>
    <scope>INTERACTION WITH NOTCH1</scope>
</reference>
<reference key="10">
    <citation type="journal article" date="2019" name="Hum. Mol. Genet.">
        <title>Selective serotonin reuptake inhibitors ameliorate MEGF10 myopathy.</title>
        <authorList>
            <person name="Saha M."/>
            <person name="Rizzo S.A."/>
            <person name="Ramanathan M."/>
            <person name="Hightower R.M."/>
            <person name="Santostefano K.E."/>
            <person name="Terada N."/>
            <person name="Finkel R.S."/>
            <person name="Berg J.S."/>
            <person name="Chahin N."/>
            <person name="Pacak C.A."/>
            <person name="Wagner R.E."/>
            <person name="Alexander M.S."/>
            <person name="Draper I."/>
            <person name="Kang P.B."/>
        </authorList>
    </citation>
    <scope>FUNCTION</scope>
    <scope>DISRUPTION PHENOTYPE</scope>
</reference>
<sequence>MAISSSSCLGLICSLLCHWVGTASSLNLEDPNVCSHWESYSVTVQESYPHPFDQIYYTSCTDILNWFKCTRHRISYRTAYRHGEKTMYRRKSQCCPGFYESRDMCVPHCADKCVHGRCIAPNTCQCEPGWGGTNCSSACDGDHWGPHCSSRCQCKNRALCNPITGACHCAAGYRGWRCEDRCEQGTYGNDCHQRCQCQNGATCDHITGECRCSPGYTGAFCEDLCPPGKHGPHCEQRCPCQNGGVCHHVTGECSCPSGWMGTVCGQPCPEGRFGKNCSQECQCHNGGTCDAATGQCHCSPGYTGERCQDECPVGSYGVRCAEACRCVNGGKCYHVSGTCLCEAGFSGELCEARLCPEGLYGIKCDKRCPCHLDNTHSCHPMSGECGCKPGWSGLYCNETCSPGFYGEACQQICSCQNGADCDSVTGRCACAPGFKGTDCSTPCPLGRYGINCSSRCGCKNDAVCSPVDGSCICKAGWHGVDCSIRCPSGTWGFGCNLTCQCLNGGACNTLDGTCTCAPGWRGAKCEFPCQDGTYGLNCAERCDCSHADGCHPTTGHCRCLPGWSGVHCDSVCAEGRWGPNCSLPCYCKNGASCSPDDGICECAPGFRGTTCQRICSPGFYGHRCSQTCPQCVHSSGPCHHITGLCDCLPGFTGALCNEVCPSGRFGKNCAGVCTCTNNGTCNPIDRSCQCYPGWIGSDCSQPCPPAHWGPNCIHTCNCHNGAFCSAYDGECKCTPGWTGLYCTQRCPLGFYGKDCALICQCQNGADCDHISGQCTCRTGFMGRHCEQKCPAGTYGYGCRQICDCLNNSTCDHITGTCYCSPGWKGARCDQAGVIIVGNLNSLSRTSTALPADSYQIGAIAGIVVLVLVVLFLLALFIIYRHKQKRKESSMPAVTYTPAMRVINADYTIAETLPHSNGGNANSHYFTNPSYHTLSQCATSPHVNNRDRMTIAKSKNNQLFVNLKNVNPGKRGTLVDCTGTLPADWKQGGYLNELGAFGLDRSYMGKSLKDLGKNSEYNSSTCSLSSSENPYATIKDPPALLPKSSECGYVEMKSPARRDSPYAEINNSTPANRNVYEVEPTVSVVQGVFSNSGHVTQDPYDLPKNSHIPCHYDLLPVRDSSSSPKREDGGGSNSTSSNSTSSSSSSSE</sequence>
<organism>
    <name type="scientific">Mus musculus</name>
    <name type="common">Mouse</name>
    <dbReference type="NCBI Taxonomy" id="10090"/>
    <lineage>
        <taxon>Eukaryota</taxon>
        <taxon>Metazoa</taxon>
        <taxon>Chordata</taxon>
        <taxon>Craniata</taxon>
        <taxon>Vertebrata</taxon>
        <taxon>Euteleostomi</taxon>
        <taxon>Mammalia</taxon>
        <taxon>Eutheria</taxon>
        <taxon>Euarchontoglires</taxon>
        <taxon>Glires</taxon>
        <taxon>Rodentia</taxon>
        <taxon>Myomorpha</taxon>
        <taxon>Muroidea</taxon>
        <taxon>Muridae</taxon>
        <taxon>Murinae</taxon>
        <taxon>Mus</taxon>
        <taxon>Mus</taxon>
    </lineage>
</organism>
<accession>Q6DIB5</accession>
<accession>Q3TLU3</accession>
<accession>Q3UG73</accession>
<keyword id="KW-0130">Cell adhesion</keyword>
<keyword id="KW-1003">Cell membrane</keyword>
<keyword id="KW-0966">Cell projection</keyword>
<keyword id="KW-1015">Disulfide bond</keyword>
<keyword id="KW-0245">EGF-like domain</keyword>
<keyword id="KW-0325">Glycoprotein</keyword>
<keyword id="KW-0472">Membrane</keyword>
<keyword id="KW-0517">Myogenesis</keyword>
<keyword id="KW-0581">Phagocytosis</keyword>
<keyword id="KW-0597">Phosphoprotein</keyword>
<keyword id="KW-1185">Reference proteome</keyword>
<keyword id="KW-0677">Repeat</keyword>
<keyword id="KW-0732">Signal</keyword>
<keyword id="KW-0812">Transmembrane</keyword>
<keyword id="KW-1133">Transmembrane helix</keyword>
<keyword id="KW-0832">Ubl conjugation</keyword>
<feature type="signal peptide" evidence="3">
    <location>
        <begin position="1"/>
        <end position="25"/>
    </location>
</feature>
<feature type="chain" id="PRO_0000309733" description="Multiple epidermal growth factor-like domains protein 10">
    <location>
        <begin position="26"/>
        <end position="1147"/>
    </location>
</feature>
<feature type="topological domain" description="Extracellular" evidence="3">
    <location>
        <begin position="26"/>
        <end position="857"/>
    </location>
</feature>
<feature type="transmembrane region" description="Helical" evidence="3">
    <location>
        <begin position="858"/>
        <end position="878"/>
    </location>
</feature>
<feature type="topological domain" description="Cytoplasmic" evidence="3">
    <location>
        <begin position="879"/>
        <end position="1147"/>
    </location>
</feature>
<feature type="domain" description="EMI" evidence="5">
    <location>
        <begin position="30"/>
        <end position="107"/>
    </location>
</feature>
<feature type="domain" description="EGF-like 1" evidence="4">
    <location>
        <begin position="101"/>
        <end position="136"/>
    </location>
</feature>
<feature type="domain" description="EGF-like 2" evidence="4">
    <location>
        <begin position="144"/>
        <end position="179"/>
    </location>
</feature>
<feature type="domain" description="EGF-like 3" evidence="4">
    <location>
        <begin position="187"/>
        <end position="222"/>
    </location>
</feature>
<feature type="domain" description="EGF-like 4" evidence="4">
    <location>
        <begin position="230"/>
        <end position="265"/>
    </location>
</feature>
<feature type="domain" description="EGF-like 5" evidence="4">
    <location>
        <begin position="278"/>
        <end position="308"/>
    </location>
</feature>
<feature type="domain" description="EGF-like 6" evidence="4">
    <location>
        <begin position="316"/>
        <end position="351"/>
    </location>
</feature>
<feature type="domain" description="EGF-like 7" evidence="4">
    <location>
        <begin position="405"/>
        <end position="440"/>
    </location>
</feature>
<feature type="domain" description="EGF-like 8" evidence="4">
    <location>
        <begin position="453"/>
        <end position="483"/>
    </location>
</feature>
<feature type="domain" description="EGF-like 9" evidence="4">
    <location>
        <begin position="491"/>
        <end position="526"/>
    </location>
</feature>
<feature type="domain" description="EGF-like 10" evidence="4">
    <location>
        <begin position="539"/>
        <end position="569"/>
    </location>
</feature>
<feature type="domain" description="EGF-like 11" evidence="4">
    <location>
        <begin position="577"/>
        <end position="612"/>
    </location>
</feature>
<feature type="domain" description="EGF-like 12" evidence="4">
    <location>
        <begin position="665"/>
        <end position="700"/>
    </location>
</feature>
<feature type="domain" description="EGF-like 13" evidence="4">
    <location>
        <begin position="713"/>
        <end position="743"/>
    </location>
</feature>
<feature type="domain" description="EGF-like 14" evidence="4">
    <location>
        <begin position="751"/>
        <end position="786"/>
    </location>
</feature>
<feature type="domain" description="EGF-like 15" evidence="4">
    <location>
        <begin position="799"/>
        <end position="829"/>
    </location>
</feature>
<feature type="region of interest" description="Necessary for interaction with AP2M1, self-assembly and formation of the irregular, mosaic-like adhesion pattern" evidence="2">
    <location>
        <begin position="1"/>
        <end position="857"/>
    </location>
</feature>
<feature type="region of interest" description="Necessary for formation of large intracellular vacuoles" evidence="2">
    <location>
        <begin position="945"/>
        <end position="1147"/>
    </location>
</feature>
<feature type="region of interest" description="Disordered" evidence="6">
    <location>
        <begin position="1093"/>
        <end position="1147"/>
    </location>
</feature>
<feature type="compositionally biased region" description="Low complexity" evidence="6">
    <location>
        <begin position="1132"/>
        <end position="1147"/>
    </location>
</feature>
<feature type="modified residue" description="Phosphotyrosine" evidence="2">
    <location>
        <position position="1030"/>
    </location>
</feature>
<feature type="glycosylation site" description="N-linked (GlcNAc...) asparagine" evidence="3">
    <location>
        <position position="134"/>
    </location>
</feature>
<feature type="glycosylation site" description="N-linked (GlcNAc...) asparagine" evidence="3">
    <location>
        <position position="496"/>
    </location>
</feature>
<feature type="disulfide bond" evidence="3">
    <location>
        <begin position="34"/>
        <end position="95"/>
    </location>
</feature>
<feature type="disulfide bond" evidence="3">
    <location>
        <begin position="60"/>
        <end position="69"/>
    </location>
</feature>
<feature type="disulfide bond" evidence="3">
    <location>
        <begin position="94"/>
        <end position="105"/>
    </location>
</feature>
<feature type="disulfide bond" evidence="1">
    <location>
        <begin position="109"/>
        <end position="124"/>
    </location>
</feature>
<feature type="disulfide bond" evidence="1">
    <location>
        <begin position="126"/>
        <end position="135"/>
    </location>
</feature>
<feature type="disulfide bond" evidence="1">
    <location>
        <begin position="148"/>
        <end position="160"/>
    </location>
</feature>
<feature type="disulfide bond" evidence="1">
    <location>
        <begin position="154"/>
        <end position="167"/>
    </location>
</feature>
<feature type="disulfide bond" evidence="1">
    <location>
        <begin position="169"/>
        <end position="178"/>
    </location>
</feature>
<feature type="disulfide bond" evidence="1">
    <location>
        <begin position="191"/>
        <end position="203"/>
    </location>
</feature>
<feature type="disulfide bond" evidence="1">
    <location>
        <begin position="197"/>
        <end position="210"/>
    </location>
</feature>
<feature type="disulfide bond" evidence="1">
    <location>
        <begin position="212"/>
        <end position="221"/>
    </location>
</feature>
<feature type="disulfide bond" evidence="1">
    <location>
        <begin position="234"/>
        <end position="246"/>
    </location>
</feature>
<feature type="disulfide bond" evidence="1">
    <location>
        <begin position="240"/>
        <end position="253"/>
    </location>
</feature>
<feature type="disulfide bond" evidence="1">
    <location>
        <begin position="255"/>
        <end position="264"/>
    </location>
</feature>
<feature type="disulfide bond" evidence="1">
    <location>
        <begin position="281"/>
        <end position="289"/>
    </location>
</feature>
<feature type="disulfide bond" evidence="1">
    <location>
        <begin position="283"/>
        <end position="296"/>
    </location>
</feature>
<feature type="disulfide bond" evidence="1">
    <location>
        <begin position="298"/>
        <end position="307"/>
    </location>
</feature>
<feature type="disulfide bond" evidence="1">
    <location>
        <begin position="320"/>
        <end position="332"/>
    </location>
</feature>
<feature type="disulfide bond" evidence="1">
    <location>
        <begin position="326"/>
        <end position="339"/>
    </location>
</feature>
<feature type="disulfide bond" evidence="1">
    <location>
        <begin position="341"/>
        <end position="350"/>
    </location>
</feature>
<feature type="disulfide bond" evidence="1">
    <location>
        <begin position="409"/>
        <end position="421"/>
    </location>
</feature>
<feature type="disulfide bond" evidence="1">
    <location>
        <begin position="415"/>
        <end position="428"/>
    </location>
</feature>
<feature type="disulfide bond" evidence="1">
    <location>
        <begin position="430"/>
        <end position="439"/>
    </location>
</feature>
<feature type="disulfide bond" evidence="1">
    <location>
        <begin position="456"/>
        <end position="464"/>
    </location>
</feature>
<feature type="disulfide bond" evidence="1">
    <location>
        <begin position="458"/>
        <end position="471"/>
    </location>
</feature>
<feature type="disulfide bond" evidence="1">
    <location>
        <begin position="473"/>
        <end position="482"/>
    </location>
</feature>
<feature type="disulfide bond" evidence="1">
    <location>
        <begin position="495"/>
        <end position="507"/>
    </location>
</feature>
<feature type="disulfide bond" evidence="1">
    <location>
        <begin position="501"/>
        <end position="514"/>
    </location>
</feature>
<feature type="disulfide bond" evidence="1">
    <location>
        <begin position="516"/>
        <end position="525"/>
    </location>
</feature>
<feature type="disulfide bond" evidence="1">
    <location>
        <begin position="542"/>
        <end position="550"/>
    </location>
</feature>
<feature type="disulfide bond" evidence="1">
    <location>
        <begin position="544"/>
        <end position="557"/>
    </location>
</feature>
<feature type="disulfide bond" evidence="1">
    <location>
        <begin position="559"/>
        <end position="568"/>
    </location>
</feature>
<feature type="disulfide bond" evidence="1">
    <location>
        <begin position="581"/>
        <end position="593"/>
    </location>
</feature>
<feature type="disulfide bond" evidence="1">
    <location>
        <begin position="587"/>
        <end position="600"/>
    </location>
</feature>
<feature type="disulfide bond" evidence="1">
    <location>
        <begin position="602"/>
        <end position="611"/>
    </location>
</feature>
<feature type="disulfide bond" evidence="1">
    <location>
        <begin position="669"/>
        <end position="681"/>
    </location>
</feature>
<feature type="disulfide bond" evidence="1">
    <location>
        <begin position="675"/>
        <end position="688"/>
    </location>
</feature>
<feature type="disulfide bond" evidence="1">
    <location>
        <begin position="690"/>
        <end position="699"/>
    </location>
</feature>
<feature type="disulfide bond" evidence="1">
    <location>
        <begin position="716"/>
        <end position="724"/>
    </location>
</feature>
<feature type="disulfide bond" evidence="1">
    <location>
        <begin position="718"/>
        <end position="731"/>
    </location>
</feature>
<feature type="disulfide bond" evidence="1">
    <location>
        <begin position="733"/>
        <end position="742"/>
    </location>
</feature>
<feature type="disulfide bond" evidence="1">
    <location>
        <begin position="755"/>
        <end position="767"/>
    </location>
</feature>
<feature type="disulfide bond" evidence="1">
    <location>
        <begin position="761"/>
        <end position="774"/>
    </location>
</feature>
<feature type="disulfide bond" evidence="1">
    <location>
        <begin position="776"/>
        <end position="785"/>
    </location>
</feature>
<feature type="disulfide bond" evidence="1">
    <location>
        <begin position="802"/>
        <end position="810"/>
    </location>
</feature>
<feature type="disulfide bond" evidence="1">
    <location>
        <begin position="804"/>
        <end position="817"/>
    </location>
</feature>
<feature type="disulfide bond" evidence="1">
    <location>
        <begin position="819"/>
        <end position="828"/>
    </location>
</feature>
<feature type="sequence conflict" description="In Ref. 1; BAE38699." evidence="15" ref="1">
    <original>A</original>
    <variation>T</variation>
    <location>
        <position position="323"/>
    </location>
</feature>
<feature type="sequence conflict" description="In Ref. 1; BAE38699." evidence="15" ref="1">
    <original>G</original>
    <variation>S</variation>
    <location>
        <position position="1092"/>
    </location>
</feature>
<feature type="sequence conflict" description="In Ref. 1; BAE38699." evidence="15" ref="1">
    <original>N</original>
    <variation>S</variation>
    <location>
        <position position="1137"/>
    </location>
</feature>
<feature type="sequence conflict" description="In Ref. 1; BAE38699." evidence="15" ref="1">
    <original>S</original>
    <variation>T</variation>
    <location>
        <position position="1140"/>
    </location>
</feature>
<protein>
    <recommendedName>
        <fullName evidence="16">Multiple epidermal growth factor-like domains protein 10</fullName>
        <shortName>Multiple EGF-like domains protein 10</shortName>
    </recommendedName>
</protein>
<name>MEG10_MOUSE</name>
<gene>
    <name evidence="16" type="primary">Megf10</name>
</gene>